<sequence length="237" mass="25726">MSQPIYKRILLKLSGEALQGEDGLGIDPAILDRMAVEIKELVEMGVEVSVVLGGGNLFRGAKLAKAGMNRVVGDHMGMLATVMNGLAMRDSLFRADVNAKLMSAFQLNGICDTYNWSEAIKMLREKRVVIFSAGTGNPFFTTDSTACLRGIEIEADVVLKATKVDGVYDCDPAKNPDAKLYKNLSYAEVIDKELKVMDLSAFTLARDHGMPIRVFNMGKPGALRQVVTGTEEGTTIC</sequence>
<comment type="function">
    <text evidence="3">Catalyzes the reversible phosphorylation of UMP to UDP.</text>
</comment>
<comment type="catalytic activity">
    <reaction>
        <text>UMP + ATP = UDP + ADP</text>
        <dbReference type="Rhea" id="RHEA:24400"/>
        <dbReference type="ChEBI" id="CHEBI:30616"/>
        <dbReference type="ChEBI" id="CHEBI:57865"/>
        <dbReference type="ChEBI" id="CHEBI:58223"/>
        <dbReference type="ChEBI" id="CHEBI:456216"/>
        <dbReference type="EC" id="2.7.4.22"/>
    </reaction>
</comment>
<comment type="activity regulation">
    <text evidence="3">Allosterically activated by GTP. Inhibited by UTP.</text>
</comment>
<comment type="biophysicochemical properties">
    <kinetics>
        <KM evidence="3">1.57 mM for ATP (in the absence of GTP)</KM>
        <KM evidence="3">0.46 mM for ATP (in the presence of GTP)</KM>
        <KM evidence="3">40 uM for UMP</KM>
        <Vmax evidence="3">57.0 umol/min/mg enzyme</Vmax>
    </kinetics>
</comment>
<comment type="pathway">
    <text>Pyrimidine metabolism; CTP biosynthesis via de novo pathway; UDP from UMP (UMPK route): step 1/1.</text>
</comment>
<comment type="subunit">
    <text evidence="3">Homohexamer.</text>
</comment>
<comment type="subcellular location">
    <subcellularLocation>
        <location evidence="1">Cytoplasm</location>
    </subcellularLocation>
</comment>
<comment type="similarity">
    <text evidence="4">Belongs to the UMP kinase family.</text>
</comment>
<accession>P43890</accession>
<protein>
    <recommendedName>
        <fullName>Uridylate kinase</fullName>
        <shortName>UK</shortName>
        <ecNumber>2.7.4.22</ecNumber>
    </recommendedName>
    <alternativeName>
        <fullName>Uridine monophosphate kinase</fullName>
        <shortName>UMP kinase</shortName>
        <shortName>UMPK</shortName>
    </alternativeName>
</protein>
<proteinExistence type="evidence at protein level"/>
<reference key="1">
    <citation type="journal article" date="1995" name="Science">
        <title>Whole-genome random sequencing and assembly of Haemophilus influenzae Rd.</title>
        <authorList>
            <person name="Fleischmann R.D."/>
            <person name="Adams M.D."/>
            <person name="White O."/>
            <person name="Clayton R.A."/>
            <person name="Kirkness E.F."/>
            <person name="Kerlavage A.R."/>
            <person name="Bult C.J."/>
            <person name="Tomb J.-F."/>
            <person name="Dougherty B.A."/>
            <person name="Merrick J.M."/>
            <person name="McKenney K."/>
            <person name="Sutton G.G."/>
            <person name="FitzHugh W."/>
            <person name="Fields C.A."/>
            <person name="Gocayne J.D."/>
            <person name="Scott J.D."/>
            <person name="Shirley R."/>
            <person name="Liu L.-I."/>
            <person name="Glodek A."/>
            <person name="Kelley J.M."/>
            <person name="Weidman J.F."/>
            <person name="Phillips C.A."/>
            <person name="Spriggs T."/>
            <person name="Hedblom E."/>
            <person name="Cotton M.D."/>
            <person name="Utterback T.R."/>
            <person name="Hanna M.C."/>
            <person name="Nguyen D.T."/>
            <person name="Saudek D.M."/>
            <person name="Brandon R.C."/>
            <person name="Fine L.D."/>
            <person name="Fritchman J.L."/>
            <person name="Fuhrmann J.L."/>
            <person name="Geoghagen N.S.M."/>
            <person name="Gnehm C.L."/>
            <person name="McDonald L.A."/>
            <person name="Small K.V."/>
            <person name="Fraser C.M."/>
            <person name="Smith H.O."/>
            <person name="Venter J.C."/>
        </authorList>
    </citation>
    <scope>NUCLEOTIDE SEQUENCE [LARGE SCALE GENOMIC DNA]</scope>
    <source>
        <strain>ATCC 51907 / DSM 11121 / KW20 / Rd</strain>
    </source>
</reference>
<reference key="2">
    <citation type="journal article" date="2007" name="J. Biol. Chem.">
        <title>Regulatory mechanisms differ in UMP kinases from Gram-negative and Gram-positive bacteria.</title>
        <authorList>
            <person name="Evrin C."/>
            <person name="Straut M."/>
            <person name="Slavova-Azmanova N."/>
            <person name="Bucurenci N."/>
            <person name="Onu A."/>
            <person name="Assairi L."/>
            <person name="Ionescu M."/>
            <person name="Palibroda N."/>
            <person name="Barzu O."/>
            <person name="Gilles A.-M."/>
        </authorList>
    </citation>
    <scope>FUNCTION</scope>
    <scope>ACTIVITY REGULATION</scope>
    <scope>KINETIC PARAMETERS</scope>
    <scope>IDENTIFICATION BY MASS SPECTROMETRY</scope>
    <scope>SUBUNIT</scope>
</reference>
<reference key="3">
    <citation type="submission" date="2005-06" db="PDB data bank">
        <title>Crystal structure of uridylate kinase.</title>
        <authorList>
            <consortium name="New York structural genomics research consortium (NYSGRC)"/>
        </authorList>
    </citation>
    <scope>X-RAY CRYSTALLOGRAPHY (2.1 ANGSTROMS) OF 2-237</scope>
</reference>
<organism>
    <name type="scientific">Haemophilus influenzae (strain ATCC 51907 / DSM 11121 / KW20 / Rd)</name>
    <dbReference type="NCBI Taxonomy" id="71421"/>
    <lineage>
        <taxon>Bacteria</taxon>
        <taxon>Pseudomonadati</taxon>
        <taxon>Pseudomonadota</taxon>
        <taxon>Gammaproteobacteria</taxon>
        <taxon>Pasteurellales</taxon>
        <taxon>Pasteurellaceae</taxon>
        <taxon>Haemophilus</taxon>
    </lineage>
</organism>
<gene>
    <name type="primary">pyrH</name>
    <name type="synonym">smbA</name>
    <name type="ordered locus">HI_1065</name>
</gene>
<dbReference type="EC" id="2.7.4.22"/>
<dbReference type="EMBL" id="L42023">
    <property type="protein sequence ID" value="AAC22719.1"/>
    <property type="molecule type" value="Genomic_DNA"/>
</dbReference>
<dbReference type="PIR" id="H64180">
    <property type="entry name" value="H64180"/>
</dbReference>
<dbReference type="RefSeq" id="NP_439223.1">
    <property type="nucleotide sequence ID" value="NC_000907.1"/>
</dbReference>
<dbReference type="PDB" id="2A1F">
    <property type="method" value="X-ray"/>
    <property type="resolution" value="2.10 A"/>
    <property type="chains" value="A/B/C/D/E/F=2-237"/>
</dbReference>
<dbReference type="PDBsum" id="2A1F"/>
<dbReference type="SMR" id="P43890"/>
<dbReference type="STRING" id="71421.HI_1065"/>
<dbReference type="DNASU" id="950042"/>
<dbReference type="EnsemblBacteria" id="AAC22719">
    <property type="protein sequence ID" value="AAC22719"/>
    <property type="gene ID" value="HI_1065"/>
</dbReference>
<dbReference type="KEGG" id="hin:HI_1065"/>
<dbReference type="PATRIC" id="fig|71421.8.peg.1109"/>
<dbReference type="eggNOG" id="COG0528">
    <property type="taxonomic scope" value="Bacteria"/>
</dbReference>
<dbReference type="HOGENOM" id="CLU_033861_0_0_6"/>
<dbReference type="OrthoDB" id="9807458at2"/>
<dbReference type="PhylomeDB" id="P43890"/>
<dbReference type="BioCyc" id="HINF71421:G1GJ1-1101-MONOMER"/>
<dbReference type="SABIO-RK" id="P43890"/>
<dbReference type="UniPathway" id="UPA00159">
    <property type="reaction ID" value="UER00275"/>
</dbReference>
<dbReference type="EvolutionaryTrace" id="P43890"/>
<dbReference type="Proteomes" id="UP000000579">
    <property type="component" value="Chromosome"/>
</dbReference>
<dbReference type="GO" id="GO:0005829">
    <property type="term" value="C:cytosol"/>
    <property type="evidence" value="ECO:0000318"/>
    <property type="project" value="GO_Central"/>
</dbReference>
<dbReference type="GO" id="GO:0005524">
    <property type="term" value="F:ATP binding"/>
    <property type="evidence" value="ECO:0007669"/>
    <property type="project" value="UniProtKB-KW"/>
</dbReference>
<dbReference type="GO" id="GO:0033862">
    <property type="term" value="F:UMP kinase activity"/>
    <property type="evidence" value="ECO:0000318"/>
    <property type="project" value="GO_Central"/>
</dbReference>
<dbReference type="GO" id="GO:0044210">
    <property type="term" value="P:'de novo' CTP biosynthetic process"/>
    <property type="evidence" value="ECO:0007669"/>
    <property type="project" value="UniProtKB-UniRule"/>
</dbReference>
<dbReference type="GO" id="GO:0006225">
    <property type="term" value="P:UDP biosynthetic process"/>
    <property type="evidence" value="ECO:0000318"/>
    <property type="project" value="GO_Central"/>
</dbReference>
<dbReference type="CDD" id="cd04254">
    <property type="entry name" value="AAK_UMPK-PyrH-Ec"/>
    <property type="match status" value="1"/>
</dbReference>
<dbReference type="FunFam" id="3.40.1160.10:FF:000001">
    <property type="entry name" value="Uridylate kinase"/>
    <property type="match status" value="1"/>
</dbReference>
<dbReference type="Gene3D" id="3.40.1160.10">
    <property type="entry name" value="Acetylglutamate kinase-like"/>
    <property type="match status" value="1"/>
</dbReference>
<dbReference type="HAMAP" id="MF_01220_B">
    <property type="entry name" value="PyrH_B"/>
    <property type="match status" value="1"/>
</dbReference>
<dbReference type="InterPro" id="IPR036393">
    <property type="entry name" value="AceGlu_kinase-like_sf"/>
</dbReference>
<dbReference type="InterPro" id="IPR001048">
    <property type="entry name" value="Asp/Glu/Uridylate_kinase"/>
</dbReference>
<dbReference type="InterPro" id="IPR011817">
    <property type="entry name" value="Uridylate_kinase"/>
</dbReference>
<dbReference type="InterPro" id="IPR015963">
    <property type="entry name" value="Uridylate_kinase_bac"/>
</dbReference>
<dbReference type="NCBIfam" id="TIGR02075">
    <property type="entry name" value="pyrH_bact"/>
    <property type="match status" value="1"/>
</dbReference>
<dbReference type="PANTHER" id="PTHR42833">
    <property type="entry name" value="URIDYLATE KINASE"/>
    <property type="match status" value="1"/>
</dbReference>
<dbReference type="PANTHER" id="PTHR42833:SF4">
    <property type="entry name" value="URIDYLATE KINASE PUMPKIN, CHLOROPLASTIC"/>
    <property type="match status" value="1"/>
</dbReference>
<dbReference type="Pfam" id="PF00696">
    <property type="entry name" value="AA_kinase"/>
    <property type="match status" value="1"/>
</dbReference>
<dbReference type="PIRSF" id="PIRSF005650">
    <property type="entry name" value="Uridylate_kin"/>
    <property type="match status" value="1"/>
</dbReference>
<dbReference type="SUPFAM" id="SSF53633">
    <property type="entry name" value="Carbamate kinase-like"/>
    <property type="match status" value="1"/>
</dbReference>
<keyword id="KW-0002">3D-structure</keyword>
<keyword id="KW-0021">Allosteric enzyme</keyword>
<keyword id="KW-0067">ATP-binding</keyword>
<keyword id="KW-0963">Cytoplasm</keyword>
<keyword id="KW-0418">Kinase</keyword>
<keyword id="KW-0547">Nucleotide-binding</keyword>
<keyword id="KW-0665">Pyrimidine biosynthesis</keyword>
<keyword id="KW-1185">Reference proteome</keyword>
<keyword id="KW-0808">Transferase</keyword>
<feature type="chain" id="PRO_0000143847" description="Uridylate kinase">
    <location>
        <begin position="1"/>
        <end position="237"/>
    </location>
</feature>
<feature type="region of interest" description="Involved in allosteric activation by GTP" evidence="2">
    <location>
        <begin position="20"/>
        <end position="25"/>
    </location>
</feature>
<feature type="binding site" evidence="1">
    <location>
        <begin position="12"/>
        <end position="15"/>
    </location>
    <ligand>
        <name>ATP</name>
        <dbReference type="ChEBI" id="CHEBI:30616"/>
    </ligand>
</feature>
<feature type="binding site" evidence="1">
    <location>
        <position position="54"/>
    </location>
    <ligand>
        <name>UMP</name>
        <dbReference type="ChEBI" id="CHEBI:57865"/>
    </ligand>
</feature>
<feature type="binding site" evidence="1">
    <location>
        <position position="55"/>
    </location>
    <ligand>
        <name>ATP</name>
        <dbReference type="ChEBI" id="CHEBI:30616"/>
    </ligand>
</feature>
<feature type="binding site" evidence="1">
    <location>
        <position position="59"/>
    </location>
    <ligand>
        <name>ATP</name>
        <dbReference type="ChEBI" id="CHEBI:30616"/>
    </ligand>
</feature>
<feature type="binding site" evidence="1">
    <location>
        <position position="74"/>
    </location>
    <ligand>
        <name>UMP</name>
        <dbReference type="ChEBI" id="CHEBI:57865"/>
    </ligand>
</feature>
<feature type="binding site" evidence="1">
    <location>
        <begin position="135"/>
        <end position="142"/>
    </location>
    <ligand>
        <name>UMP</name>
        <dbReference type="ChEBI" id="CHEBI:57865"/>
    </ligand>
</feature>
<feature type="binding site" evidence="1">
    <location>
        <position position="162"/>
    </location>
    <ligand>
        <name>ATP</name>
        <dbReference type="ChEBI" id="CHEBI:30616"/>
    </ligand>
</feature>
<feature type="binding site" evidence="1">
    <location>
        <position position="168"/>
    </location>
    <ligand>
        <name>ATP</name>
        <dbReference type="ChEBI" id="CHEBI:30616"/>
    </ligand>
</feature>
<feature type="binding site" evidence="1">
    <location>
        <position position="171"/>
    </location>
    <ligand>
        <name>ATP</name>
        <dbReference type="ChEBI" id="CHEBI:30616"/>
    </ligand>
</feature>
<feature type="strand" evidence="5">
    <location>
        <begin position="7"/>
        <end position="13"/>
    </location>
</feature>
<feature type="helix" evidence="5">
    <location>
        <begin position="15"/>
        <end position="18"/>
    </location>
</feature>
<feature type="strand" evidence="5">
    <location>
        <begin position="23"/>
        <end position="25"/>
    </location>
</feature>
<feature type="helix" evidence="5">
    <location>
        <begin position="28"/>
        <end position="42"/>
    </location>
</feature>
<feature type="turn" evidence="5">
    <location>
        <begin position="43"/>
        <end position="45"/>
    </location>
</feature>
<feature type="strand" evidence="5">
    <location>
        <begin position="47"/>
        <end position="52"/>
    </location>
</feature>
<feature type="turn" evidence="5">
    <location>
        <begin position="55"/>
        <end position="57"/>
    </location>
</feature>
<feature type="helix" evidence="5">
    <location>
        <begin position="61"/>
        <end position="65"/>
    </location>
</feature>
<feature type="helix" evidence="5">
    <location>
        <begin position="70"/>
        <end position="94"/>
    </location>
</feature>
<feature type="strand" evidence="5">
    <location>
        <begin position="99"/>
        <end position="105"/>
    </location>
</feature>
<feature type="turn" evidence="5">
    <location>
        <begin position="108"/>
        <end position="110"/>
    </location>
</feature>
<feature type="strand" evidence="5">
    <location>
        <begin position="111"/>
        <end position="113"/>
    </location>
</feature>
<feature type="helix" evidence="5">
    <location>
        <begin position="116"/>
        <end position="124"/>
    </location>
</feature>
<feature type="strand" evidence="5">
    <location>
        <begin position="128"/>
        <end position="133"/>
    </location>
</feature>
<feature type="helix" evidence="5">
    <location>
        <begin position="142"/>
        <end position="152"/>
    </location>
</feature>
<feature type="strand" evidence="5">
    <location>
        <begin position="156"/>
        <end position="166"/>
    </location>
</feature>
<feature type="strand" evidence="5">
    <location>
        <begin position="182"/>
        <end position="184"/>
    </location>
</feature>
<feature type="helix" evidence="5">
    <location>
        <begin position="186"/>
        <end position="191"/>
    </location>
</feature>
<feature type="helix" evidence="5">
    <location>
        <begin position="199"/>
        <end position="208"/>
    </location>
</feature>
<feature type="strand" evidence="5">
    <location>
        <begin position="212"/>
        <end position="216"/>
    </location>
</feature>
<feature type="helix" evidence="5">
    <location>
        <begin position="222"/>
        <end position="227"/>
    </location>
</feature>
<feature type="strand" evidence="5">
    <location>
        <begin position="232"/>
        <end position="236"/>
    </location>
</feature>
<evidence type="ECO:0000250" key="1"/>
<evidence type="ECO:0000255" key="2"/>
<evidence type="ECO:0000269" key="3">
    <source>
    </source>
</evidence>
<evidence type="ECO:0000305" key="4"/>
<evidence type="ECO:0007829" key="5">
    <source>
        <dbReference type="PDB" id="2A1F"/>
    </source>
</evidence>
<name>PYRH_HAEIN</name>